<accession>Q1KXS0</accession>
<sequence length="218" mass="25134">MGQKINPIGFRLGTTQGHHSLWFAQPKNYSEGLQEDQKIRNYIKNYVQKNMKTSSGVEGIARIEIQKRIDLIQIIIYMGFPKILIESRPRGIEELQMNLQKEFNSVNRKLNIAITRIEKPYGNPNILAEFIAGQLKNRVSFRKAMKKAIELTEQADTKGIQVQIAGRIDGKEIARVEWIREGRVPLQTIRAKIDYCSYTVRTIYGVLGIKIWIFIEGE</sequence>
<evidence type="ECO:0000250" key="1"/>
<evidence type="ECO:0000305" key="2"/>
<keyword id="KW-0150">Chloroplast</keyword>
<keyword id="KW-0934">Plastid</keyword>
<keyword id="KW-0687">Ribonucleoprotein</keyword>
<keyword id="KW-0689">Ribosomal protein</keyword>
<keyword id="KW-0694">RNA-binding</keyword>
<keyword id="KW-0699">rRNA-binding</keyword>
<name>RR3_HELAN</name>
<protein>
    <recommendedName>
        <fullName evidence="2">Small ribosomal subunit protein uS3c</fullName>
    </recommendedName>
    <alternativeName>
        <fullName>30S ribosomal protein S3, chloroplastic</fullName>
    </alternativeName>
</protein>
<feature type="chain" id="PRO_0000276992" description="Small ribosomal subunit protein uS3c">
    <location>
        <begin position="1"/>
        <end position="218"/>
    </location>
</feature>
<feature type="domain" description="KH type-2">
    <location>
        <begin position="47"/>
        <end position="118"/>
    </location>
</feature>
<organism>
    <name type="scientific">Helianthus annuus</name>
    <name type="common">Common sunflower</name>
    <dbReference type="NCBI Taxonomy" id="4232"/>
    <lineage>
        <taxon>Eukaryota</taxon>
        <taxon>Viridiplantae</taxon>
        <taxon>Streptophyta</taxon>
        <taxon>Embryophyta</taxon>
        <taxon>Tracheophyta</taxon>
        <taxon>Spermatophyta</taxon>
        <taxon>Magnoliopsida</taxon>
        <taxon>eudicotyledons</taxon>
        <taxon>Gunneridae</taxon>
        <taxon>Pentapetalae</taxon>
        <taxon>asterids</taxon>
        <taxon>campanulids</taxon>
        <taxon>Asterales</taxon>
        <taxon>Asteraceae</taxon>
        <taxon>Asteroideae</taxon>
        <taxon>Heliantheae alliance</taxon>
        <taxon>Heliantheae</taxon>
        <taxon>Helianthus</taxon>
    </lineage>
</organism>
<gene>
    <name type="primary">rps3</name>
</gene>
<dbReference type="EMBL" id="DQ383815">
    <property type="protein sequence ID" value="ABD47184.1"/>
    <property type="molecule type" value="Genomic_DNA"/>
</dbReference>
<dbReference type="RefSeq" id="YP_588156.1">
    <property type="nucleotide sequence ID" value="NC_007977.1"/>
</dbReference>
<dbReference type="SMR" id="Q1KXS0"/>
<dbReference type="GeneID" id="4055609"/>
<dbReference type="KEGG" id="han:4055609"/>
<dbReference type="OMA" id="WFAQPKK"/>
<dbReference type="OrthoDB" id="1842609at2759"/>
<dbReference type="PhylomeDB" id="Q1KXS0"/>
<dbReference type="GO" id="GO:0009507">
    <property type="term" value="C:chloroplast"/>
    <property type="evidence" value="ECO:0007669"/>
    <property type="project" value="UniProtKB-SubCell"/>
</dbReference>
<dbReference type="GO" id="GO:1990904">
    <property type="term" value="C:ribonucleoprotein complex"/>
    <property type="evidence" value="ECO:0007669"/>
    <property type="project" value="UniProtKB-KW"/>
</dbReference>
<dbReference type="GO" id="GO:0005840">
    <property type="term" value="C:ribosome"/>
    <property type="evidence" value="ECO:0007669"/>
    <property type="project" value="UniProtKB-KW"/>
</dbReference>
<dbReference type="GO" id="GO:0019843">
    <property type="term" value="F:rRNA binding"/>
    <property type="evidence" value="ECO:0007669"/>
    <property type="project" value="UniProtKB-UniRule"/>
</dbReference>
<dbReference type="GO" id="GO:0003735">
    <property type="term" value="F:structural constituent of ribosome"/>
    <property type="evidence" value="ECO:0007669"/>
    <property type="project" value="InterPro"/>
</dbReference>
<dbReference type="GO" id="GO:0006412">
    <property type="term" value="P:translation"/>
    <property type="evidence" value="ECO:0007669"/>
    <property type="project" value="UniProtKB-UniRule"/>
</dbReference>
<dbReference type="CDD" id="cd02412">
    <property type="entry name" value="KH-II_30S_S3"/>
    <property type="match status" value="1"/>
</dbReference>
<dbReference type="FunFam" id="3.30.1140.32:FF:000003">
    <property type="entry name" value="30S ribosomal protein S3, chloroplastic"/>
    <property type="match status" value="1"/>
</dbReference>
<dbReference type="FunFam" id="3.30.300.20:FF:000008">
    <property type="entry name" value="30S ribosomal protein S3, chloroplastic"/>
    <property type="match status" value="1"/>
</dbReference>
<dbReference type="Gene3D" id="3.30.300.20">
    <property type="match status" value="1"/>
</dbReference>
<dbReference type="Gene3D" id="3.30.1140.32">
    <property type="entry name" value="Ribosomal protein S3, C-terminal domain"/>
    <property type="match status" value="1"/>
</dbReference>
<dbReference type="HAMAP" id="MF_01309_B">
    <property type="entry name" value="Ribosomal_uS3_B"/>
    <property type="match status" value="1"/>
</dbReference>
<dbReference type="InterPro" id="IPR015946">
    <property type="entry name" value="KH_dom-like_a/b"/>
</dbReference>
<dbReference type="InterPro" id="IPR004044">
    <property type="entry name" value="KH_dom_type_2"/>
</dbReference>
<dbReference type="InterPro" id="IPR009019">
    <property type="entry name" value="KH_sf_prok-type"/>
</dbReference>
<dbReference type="InterPro" id="IPR036419">
    <property type="entry name" value="Ribosomal_S3_C_sf"/>
</dbReference>
<dbReference type="InterPro" id="IPR005704">
    <property type="entry name" value="Ribosomal_uS3_bac-typ"/>
</dbReference>
<dbReference type="InterPro" id="IPR001351">
    <property type="entry name" value="Ribosomal_uS3_C"/>
</dbReference>
<dbReference type="InterPro" id="IPR018280">
    <property type="entry name" value="Ribosomal_uS3_CS"/>
</dbReference>
<dbReference type="NCBIfam" id="TIGR01009">
    <property type="entry name" value="rpsC_bact"/>
    <property type="match status" value="1"/>
</dbReference>
<dbReference type="PANTHER" id="PTHR11760">
    <property type="entry name" value="30S/40S RIBOSOMAL PROTEIN S3"/>
    <property type="match status" value="1"/>
</dbReference>
<dbReference type="PANTHER" id="PTHR11760:SF19">
    <property type="entry name" value="SMALL RIBOSOMAL SUBUNIT PROTEIN US3C"/>
    <property type="match status" value="1"/>
</dbReference>
<dbReference type="Pfam" id="PF00189">
    <property type="entry name" value="Ribosomal_S3_C"/>
    <property type="match status" value="1"/>
</dbReference>
<dbReference type="SUPFAM" id="SSF54814">
    <property type="entry name" value="Prokaryotic type KH domain (KH-domain type II)"/>
    <property type="match status" value="1"/>
</dbReference>
<dbReference type="SUPFAM" id="SSF54821">
    <property type="entry name" value="Ribosomal protein S3 C-terminal domain"/>
    <property type="match status" value="1"/>
</dbReference>
<dbReference type="PROSITE" id="PS50823">
    <property type="entry name" value="KH_TYPE_2"/>
    <property type="match status" value="1"/>
</dbReference>
<dbReference type="PROSITE" id="PS00548">
    <property type="entry name" value="RIBOSOMAL_S3"/>
    <property type="match status" value="1"/>
</dbReference>
<proteinExistence type="inferred from homology"/>
<reference key="1">
    <citation type="submission" date="2006-01" db="EMBL/GenBank/DDBJ databases">
        <title>A comparison of the first two published chloroplast genomes in Asteraceae: Lactuca and Helianthus.</title>
        <authorList>
            <person name="Timme R.E."/>
            <person name="Kuehl J.V."/>
            <person name="Boore J.L."/>
            <person name="Jansen R.K."/>
        </authorList>
    </citation>
    <scope>NUCLEOTIDE SEQUENCE [LARGE SCALE GENOMIC DNA]</scope>
    <source>
        <strain>cv. HA383</strain>
    </source>
</reference>
<geneLocation type="chloroplast"/>
<comment type="subunit">
    <text evidence="1">Part of the 30S ribosomal subunit.</text>
</comment>
<comment type="subcellular location">
    <subcellularLocation>
        <location>Plastid</location>
        <location>Chloroplast</location>
    </subcellularLocation>
</comment>
<comment type="similarity">
    <text evidence="2">Belongs to the universal ribosomal protein uS3 family.</text>
</comment>